<proteinExistence type="inferred from homology"/>
<evidence type="ECO:0000255" key="1">
    <source>
        <dbReference type="HAMAP-Rule" id="MF_00009"/>
    </source>
</evidence>
<gene>
    <name evidence="1" type="primary">ybeY</name>
    <name type="ordered locus">BF0156</name>
</gene>
<name>YBEY_BACFR</name>
<organism>
    <name type="scientific">Bacteroides fragilis (strain YCH46)</name>
    <dbReference type="NCBI Taxonomy" id="295405"/>
    <lineage>
        <taxon>Bacteria</taxon>
        <taxon>Pseudomonadati</taxon>
        <taxon>Bacteroidota</taxon>
        <taxon>Bacteroidia</taxon>
        <taxon>Bacteroidales</taxon>
        <taxon>Bacteroidaceae</taxon>
        <taxon>Bacteroides</taxon>
    </lineage>
</organism>
<reference key="1">
    <citation type="journal article" date="2004" name="Proc. Natl. Acad. Sci. U.S.A.">
        <title>Genomic analysis of Bacteroides fragilis reveals extensive DNA inversions regulating cell surface adaptation.</title>
        <authorList>
            <person name="Kuwahara T."/>
            <person name="Yamashita A."/>
            <person name="Hirakawa H."/>
            <person name="Nakayama H."/>
            <person name="Toh H."/>
            <person name="Okada N."/>
            <person name="Kuhara S."/>
            <person name="Hattori M."/>
            <person name="Hayashi T."/>
            <person name="Ohnishi Y."/>
        </authorList>
    </citation>
    <scope>NUCLEOTIDE SEQUENCE [LARGE SCALE GENOMIC DNA]</scope>
    <source>
        <strain>YCH46</strain>
    </source>
</reference>
<feature type="chain" id="PRO_0000102406" description="Endoribonuclease YbeY">
    <location>
        <begin position="1"/>
        <end position="139"/>
    </location>
</feature>
<feature type="binding site" evidence="1">
    <location>
        <position position="107"/>
    </location>
    <ligand>
        <name>Zn(2+)</name>
        <dbReference type="ChEBI" id="CHEBI:29105"/>
        <note>catalytic</note>
    </ligand>
</feature>
<feature type="binding site" evidence="1">
    <location>
        <position position="111"/>
    </location>
    <ligand>
        <name>Zn(2+)</name>
        <dbReference type="ChEBI" id="CHEBI:29105"/>
        <note>catalytic</note>
    </ligand>
</feature>
<feature type="binding site" evidence="1">
    <location>
        <position position="117"/>
    </location>
    <ligand>
        <name>Zn(2+)</name>
        <dbReference type="ChEBI" id="CHEBI:29105"/>
        <note>catalytic</note>
    </ligand>
</feature>
<protein>
    <recommendedName>
        <fullName evidence="1">Endoribonuclease YbeY</fullName>
        <ecNumber evidence="1">3.1.-.-</ecNumber>
    </recommendedName>
</protein>
<accession>Q650C1</accession>
<dbReference type="EC" id="3.1.-.-" evidence="1"/>
<dbReference type="EMBL" id="AP006841">
    <property type="protein sequence ID" value="BAD46905.1"/>
    <property type="molecule type" value="Genomic_DNA"/>
</dbReference>
<dbReference type="RefSeq" id="WP_005783716.1">
    <property type="nucleotide sequence ID" value="NC_006347.1"/>
</dbReference>
<dbReference type="RefSeq" id="YP_097439.1">
    <property type="nucleotide sequence ID" value="NC_006347.1"/>
</dbReference>
<dbReference type="SMR" id="Q650C1"/>
<dbReference type="STRING" id="295405.BF0156"/>
<dbReference type="GeneID" id="60368216"/>
<dbReference type="KEGG" id="bfr:BF0156"/>
<dbReference type="PATRIC" id="fig|295405.11.peg.188"/>
<dbReference type="HOGENOM" id="CLU_106710_3_3_10"/>
<dbReference type="OrthoDB" id="9811984at2"/>
<dbReference type="Proteomes" id="UP000002197">
    <property type="component" value="Chromosome"/>
</dbReference>
<dbReference type="GO" id="GO:0005737">
    <property type="term" value="C:cytoplasm"/>
    <property type="evidence" value="ECO:0007669"/>
    <property type="project" value="UniProtKB-SubCell"/>
</dbReference>
<dbReference type="GO" id="GO:0004222">
    <property type="term" value="F:metalloendopeptidase activity"/>
    <property type="evidence" value="ECO:0007669"/>
    <property type="project" value="InterPro"/>
</dbReference>
<dbReference type="GO" id="GO:0004521">
    <property type="term" value="F:RNA endonuclease activity"/>
    <property type="evidence" value="ECO:0007669"/>
    <property type="project" value="UniProtKB-UniRule"/>
</dbReference>
<dbReference type="GO" id="GO:0008270">
    <property type="term" value="F:zinc ion binding"/>
    <property type="evidence" value="ECO:0007669"/>
    <property type="project" value="UniProtKB-UniRule"/>
</dbReference>
<dbReference type="GO" id="GO:0006364">
    <property type="term" value="P:rRNA processing"/>
    <property type="evidence" value="ECO:0007669"/>
    <property type="project" value="UniProtKB-UniRule"/>
</dbReference>
<dbReference type="Gene3D" id="3.40.390.30">
    <property type="entry name" value="Metalloproteases ('zincins'), catalytic domain"/>
    <property type="match status" value="1"/>
</dbReference>
<dbReference type="HAMAP" id="MF_00009">
    <property type="entry name" value="Endoribonucl_YbeY"/>
    <property type="match status" value="1"/>
</dbReference>
<dbReference type="InterPro" id="IPR023091">
    <property type="entry name" value="MetalPrtase_cat_dom_sf_prd"/>
</dbReference>
<dbReference type="InterPro" id="IPR002036">
    <property type="entry name" value="YbeY"/>
</dbReference>
<dbReference type="NCBIfam" id="TIGR00043">
    <property type="entry name" value="rRNA maturation RNase YbeY"/>
    <property type="match status" value="1"/>
</dbReference>
<dbReference type="PANTHER" id="PTHR46986">
    <property type="entry name" value="ENDORIBONUCLEASE YBEY, CHLOROPLASTIC"/>
    <property type="match status" value="1"/>
</dbReference>
<dbReference type="PANTHER" id="PTHR46986:SF1">
    <property type="entry name" value="ENDORIBONUCLEASE YBEY, CHLOROPLASTIC"/>
    <property type="match status" value="1"/>
</dbReference>
<dbReference type="Pfam" id="PF02130">
    <property type="entry name" value="YbeY"/>
    <property type="match status" value="1"/>
</dbReference>
<dbReference type="SUPFAM" id="SSF55486">
    <property type="entry name" value="Metalloproteases ('zincins'), catalytic domain"/>
    <property type="match status" value="1"/>
</dbReference>
<keyword id="KW-0963">Cytoplasm</keyword>
<keyword id="KW-0255">Endonuclease</keyword>
<keyword id="KW-0378">Hydrolase</keyword>
<keyword id="KW-0479">Metal-binding</keyword>
<keyword id="KW-0540">Nuclease</keyword>
<keyword id="KW-0690">Ribosome biogenesis</keyword>
<keyword id="KW-0698">rRNA processing</keyword>
<keyword id="KW-0862">Zinc</keyword>
<comment type="function">
    <text evidence="1">Single strand-specific metallo-endoribonuclease involved in late-stage 70S ribosome quality control and in maturation of the 3' terminus of the 16S rRNA.</text>
</comment>
<comment type="cofactor">
    <cofactor evidence="1">
        <name>Zn(2+)</name>
        <dbReference type="ChEBI" id="CHEBI:29105"/>
    </cofactor>
    <text evidence="1">Binds 1 zinc ion.</text>
</comment>
<comment type="subcellular location">
    <subcellularLocation>
        <location evidence="1">Cytoplasm</location>
    </subcellularLocation>
</comment>
<comment type="similarity">
    <text evidence="1">Belongs to the endoribonuclease YbeY family.</text>
</comment>
<sequence length="139" mass="16156">MAITYQTEGIKMPDIKKRETTEWIKAVAATYEKRIGEIAYIFCSDEKILEVNRQYLQHDYYTDIITFDYCEGNRLSGDLFISLETVKTNSEQFNTPYEEELHRTIIHGILHLCGINDKGPGEREIMEAAENKALAMRKQ</sequence>